<dbReference type="EC" id="3.2.1.28" evidence="1"/>
<dbReference type="EMBL" id="CP001396">
    <property type="protein sequence ID" value="ACR62714.1"/>
    <property type="molecule type" value="Genomic_DNA"/>
</dbReference>
<dbReference type="RefSeq" id="WP_000934216.1">
    <property type="nucleotide sequence ID" value="NC_012759.1"/>
</dbReference>
<dbReference type="SMR" id="C4ZW66"/>
<dbReference type="CAZy" id="GH37">
    <property type="family name" value="Glycoside Hydrolase Family 37"/>
</dbReference>
<dbReference type="KEGG" id="ebw:BWG_3208"/>
<dbReference type="HOGENOM" id="CLU_006451_3_1_6"/>
<dbReference type="UniPathway" id="UPA00300">
    <property type="reaction ID" value="UER00535"/>
</dbReference>
<dbReference type="GO" id="GO:0005737">
    <property type="term" value="C:cytoplasm"/>
    <property type="evidence" value="ECO:0007669"/>
    <property type="project" value="UniProtKB-SubCell"/>
</dbReference>
<dbReference type="GO" id="GO:0004555">
    <property type="term" value="F:alpha,alpha-trehalase activity"/>
    <property type="evidence" value="ECO:0007669"/>
    <property type="project" value="UniProtKB-UniRule"/>
</dbReference>
<dbReference type="GO" id="GO:0071474">
    <property type="term" value="P:cellular hyperosmotic response"/>
    <property type="evidence" value="ECO:0007669"/>
    <property type="project" value="InterPro"/>
</dbReference>
<dbReference type="GO" id="GO:0005993">
    <property type="term" value="P:trehalose catabolic process"/>
    <property type="evidence" value="ECO:0007669"/>
    <property type="project" value="UniProtKB-UniRule"/>
</dbReference>
<dbReference type="FunFam" id="1.50.10.10:FF:000003">
    <property type="entry name" value="Cytoplasmic trehalase"/>
    <property type="match status" value="1"/>
</dbReference>
<dbReference type="Gene3D" id="1.50.10.10">
    <property type="match status" value="1"/>
</dbReference>
<dbReference type="HAMAP" id="MF_01059">
    <property type="entry name" value="Cyt_trehalase"/>
    <property type="match status" value="1"/>
</dbReference>
<dbReference type="InterPro" id="IPR008928">
    <property type="entry name" value="6-hairpin_glycosidase_sf"/>
</dbReference>
<dbReference type="InterPro" id="IPR012341">
    <property type="entry name" value="6hp_glycosidase-like_sf"/>
</dbReference>
<dbReference type="InterPro" id="IPR023715">
    <property type="entry name" value="Cyt_trehalase"/>
</dbReference>
<dbReference type="InterPro" id="IPR001661">
    <property type="entry name" value="Glyco_hydro_37"/>
</dbReference>
<dbReference type="InterPro" id="IPR018232">
    <property type="entry name" value="Glyco_hydro_37_CS"/>
</dbReference>
<dbReference type="NCBIfam" id="NF009773">
    <property type="entry name" value="PRK13270.1"/>
    <property type="match status" value="1"/>
</dbReference>
<dbReference type="NCBIfam" id="NF009774">
    <property type="entry name" value="PRK13271.1"/>
    <property type="match status" value="1"/>
</dbReference>
<dbReference type="PANTHER" id="PTHR23403:SF8">
    <property type="entry name" value="CYTOPLASMIC TREHALASE"/>
    <property type="match status" value="1"/>
</dbReference>
<dbReference type="PANTHER" id="PTHR23403">
    <property type="entry name" value="TREHALASE"/>
    <property type="match status" value="1"/>
</dbReference>
<dbReference type="Pfam" id="PF01204">
    <property type="entry name" value="Trehalase"/>
    <property type="match status" value="1"/>
</dbReference>
<dbReference type="PRINTS" id="PR00744">
    <property type="entry name" value="GLHYDRLASE37"/>
</dbReference>
<dbReference type="SUPFAM" id="SSF48208">
    <property type="entry name" value="Six-hairpin glycosidases"/>
    <property type="match status" value="1"/>
</dbReference>
<dbReference type="PROSITE" id="PS00927">
    <property type="entry name" value="TREHALASE_1"/>
    <property type="match status" value="1"/>
</dbReference>
<dbReference type="PROSITE" id="PS00928">
    <property type="entry name" value="TREHALASE_2"/>
    <property type="match status" value="1"/>
</dbReference>
<evidence type="ECO:0000255" key="1">
    <source>
        <dbReference type="HAMAP-Rule" id="MF_01059"/>
    </source>
</evidence>
<reference key="1">
    <citation type="journal article" date="2009" name="J. Bacteriol.">
        <title>Genomic sequencing reveals regulatory mutations and recombinational events in the widely used MC4100 lineage of Escherichia coli K-12.</title>
        <authorList>
            <person name="Ferenci T."/>
            <person name="Zhou Z."/>
            <person name="Betteridge T."/>
            <person name="Ren Y."/>
            <person name="Liu Y."/>
            <person name="Feng L."/>
            <person name="Reeves P.R."/>
            <person name="Wang L."/>
        </authorList>
    </citation>
    <scope>NUCLEOTIDE SEQUENCE [LARGE SCALE GENOMIC DNA]</scope>
    <source>
        <strain>K12 / MC4100 / BW2952</strain>
    </source>
</reference>
<comment type="function">
    <text evidence="1">Hydrolyzes trehalose to glucose. Could be involved, in cells returning to low osmolarity conditions, in the utilization of the accumulated cytoplasmic trehalose, which was synthesized in response to high osmolarity.</text>
</comment>
<comment type="catalytic activity">
    <reaction evidence="1">
        <text>alpha,alpha-trehalose + H2O = alpha-D-glucose + beta-D-glucose</text>
        <dbReference type="Rhea" id="RHEA:32675"/>
        <dbReference type="ChEBI" id="CHEBI:15377"/>
        <dbReference type="ChEBI" id="CHEBI:15903"/>
        <dbReference type="ChEBI" id="CHEBI:16551"/>
        <dbReference type="ChEBI" id="CHEBI:17925"/>
        <dbReference type="EC" id="3.2.1.28"/>
    </reaction>
</comment>
<comment type="pathway">
    <text evidence="1">Glycan degradation; trehalose degradation; D-glucose from alpha,alpha-trehalose: step 1/1.</text>
</comment>
<comment type="subunit">
    <text evidence="1">Monomer.</text>
</comment>
<comment type="subcellular location">
    <subcellularLocation>
        <location evidence="1">Cytoplasm</location>
    </subcellularLocation>
</comment>
<comment type="similarity">
    <text evidence="1">Belongs to the glycosyl hydrolase 37 family.</text>
</comment>
<proteinExistence type="inferred from homology"/>
<accession>C4ZW66</accession>
<protein>
    <recommendedName>
        <fullName evidence="1">Cytoplasmic trehalase</fullName>
        <ecNumber evidence="1">3.2.1.28</ecNumber>
    </recommendedName>
    <alternativeName>
        <fullName evidence="1">Alpha,alpha-trehalase</fullName>
    </alternativeName>
    <alternativeName>
        <fullName evidence="1">Alpha,alpha-trehalose glucohydrolase</fullName>
    </alternativeName>
</protein>
<name>TREF_ECOBW</name>
<feature type="chain" id="PRO_1000213446" description="Cytoplasmic trehalase">
    <location>
        <begin position="1"/>
        <end position="549"/>
    </location>
</feature>
<feature type="active site" description="Proton donor/acceptor" evidence="1">
    <location>
        <position position="326"/>
    </location>
</feature>
<feature type="active site" description="Proton donor/acceptor" evidence="1">
    <location>
        <position position="509"/>
    </location>
</feature>
<feature type="binding site" evidence="1">
    <location>
        <position position="168"/>
    </location>
    <ligand>
        <name>substrate</name>
    </ligand>
</feature>
<feature type="binding site" evidence="1">
    <location>
        <begin position="175"/>
        <end position="176"/>
    </location>
    <ligand>
        <name>substrate</name>
    </ligand>
</feature>
<feature type="binding site" evidence="1">
    <location>
        <position position="212"/>
    </location>
    <ligand>
        <name>substrate</name>
    </ligand>
</feature>
<feature type="binding site" evidence="1">
    <location>
        <begin position="221"/>
        <end position="223"/>
    </location>
    <ligand>
        <name>substrate</name>
    </ligand>
</feature>
<feature type="binding site" evidence="1">
    <location>
        <begin position="292"/>
        <end position="294"/>
    </location>
    <ligand>
        <name>substrate</name>
    </ligand>
</feature>
<feature type="binding site" evidence="1">
    <location>
        <position position="324"/>
    </location>
    <ligand>
        <name>substrate</name>
    </ligand>
</feature>
<feature type="binding site" evidence="1">
    <location>
        <position position="525"/>
    </location>
    <ligand>
        <name>substrate</name>
    </ligand>
</feature>
<sequence>MLNQKIQNPNPDELMIEVDLCYELDPYELKLDEMIEAEPEPEMIEGLPASDALTPADRYLELFEHVQSAKIFPDSKTFPDCAPKMDPLDILIRYRKVRRHRDFDLRKFVENHFWLPEVYSSEYVSDPQNSLKEHIDQLWPVLTREPQDHIPWSSLLALPQSYIVPGGRFSETYYWDSYFTMLGLAESGREDLLKCMADNFAWMIENYGHIPNGNRTYYLSRSQPPVFALMVELFEEDGVRGARRYLDHLKMEYAFWMDGAESLIPNQAYRHVVRMPDGSLLNRYWDDRDTPRDESWLEDVETAKHSGRPPNEVYRDLRAGAASGWDYSSRWLRDTGRLASIRTTQFIPIDLNAFLFKLESAIANISALKGEKETEALFRQKASARRDAVNRYLWDDENGIYRDYDWRREQLALFSAAAIVPLYVGMANHEQADRLANAVRSRLLTPGGILASEYETGEQWDKPNGWAPLQWMAIQGFKMYGDDLLGDEIARSWLKTVNQFYLEQHKLIEKYHIADGVPREGGGGEYPLQDGFGWTNGVVRRLIGLYGEP</sequence>
<gene>
    <name evidence="1" type="primary">treF</name>
    <name type="ordered locus">BWG_3208</name>
</gene>
<organism>
    <name type="scientific">Escherichia coli (strain K12 / MC4100 / BW2952)</name>
    <dbReference type="NCBI Taxonomy" id="595496"/>
    <lineage>
        <taxon>Bacteria</taxon>
        <taxon>Pseudomonadati</taxon>
        <taxon>Pseudomonadota</taxon>
        <taxon>Gammaproteobacteria</taxon>
        <taxon>Enterobacterales</taxon>
        <taxon>Enterobacteriaceae</taxon>
        <taxon>Escherichia</taxon>
    </lineage>
</organism>
<keyword id="KW-0963">Cytoplasm</keyword>
<keyword id="KW-0326">Glycosidase</keyword>
<keyword id="KW-0378">Hydrolase</keyword>